<comment type="function">
    <text evidence="1">Catalyzes the condensation of formaldehyde with tetrahydromethanopterin (H(4)MPT) to 5,10-methylenetetrahydromethanopterin.</text>
</comment>
<comment type="function">
    <text evidence="1">Catalyzes the reversible formation of ribulose-5-phosphate and formaldehyde from 3-hexulose-6-phosphate.</text>
</comment>
<comment type="catalytic activity">
    <reaction evidence="1">
        <text>5,6,7,8-tetrahydromethanopterin + formaldehyde = 5,10-methylenetetrahydromethanopterin + H2O</text>
        <dbReference type="Rhea" id="RHEA:24678"/>
        <dbReference type="ChEBI" id="CHEBI:15377"/>
        <dbReference type="ChEBI" id="CHEBI:16842"/>
        <dbReference type="ChEBI" id="CHEBI:57818"/>
        <dbReference type="ChEBI" id="CHEBI:58103"/>
        <dbReference type="EC" id="4.2.1.147"/>
    </reaction>
</comment>
<comment type="catalytic activity">
    <reaction evidence="1">
        <text>D-ribulose 5-phosphate + formaldehyde = D-arabino-hex-3-ulose 6-phosphate</text>
        <dbReference type="Rhea" id="RHEA:25201"/>
        <dbReference type="ChEBI" id="CHEBI:16842"/>
        <dbReference type="ChEBI" id="CHEBI:58121"/>
        <dbReference type="ChEBI" id="CHEBI:58542"/>
        <dbReference type="EC" id="4.1.2.43"/>
    </reaction>
</comment>
<comment type="pathway">
    <text evidence="1">Carbohydrate biosynthesis; D-ribose 5-phosphate biosynthesis.</text>
</comment>
<comment type="similarity">
    <text evidence="1">In the N-terminal section; belongs to the formaldehyde-activating enzyme family.</text>
</comment>
<comment type="similarity">
    <text evidence="1">In the C-terminal section; belongs to the HPS/KGPDC family. HPS subfamily.</text>
</comment>
<name>FAEHP_METAR</name>
<accession>Q0W644</accession>
<feature type="chain" id="PRO_1000067326" description="Bifunctional enzyme Fae/Hps">
    <location>
        <begin position="1"/>
        <end position="396"/>
    </location>
</feature>
<feature type="region of interest" description="Formaldehyde-activating enzyme" evidence="1">
    <location>
        <begin position="1"/>
        <end position="161"/>
    </location>
</feature>
<feature type="region of interest" description="3-hexulose-6-phosphate synthase" evidence="1">
    <location>
        <begin position="162"/>
        <end position="396"/>
    </location>
</feature>
<feature type="active site" description="Proton donor" evidence="1">
    <location>
        <position position="17"/>
    </location>
</feature>
<feature type="binding site" evidence="1">
    <location>
        <position position="19"/>
    </location>
    <ligand>
        <name>substrate</name>
    </ligand>
</feature>
<feature type="binding site" evidence="1">
    <location>
        <position position="48"/>
    </location>
    <ligand>
        <name>substrate</name>
    </ligand>
</feature>
<feature type="binding site" evidence="1">
    <location>
        <position position="66"/>
    </location>
    <ligand>
        <name>substrate</name>
    </ligand>
</feature>
<feature type="binding site" evidence="1">
    <location>
        <position position="68"/>
    </location>
    <ligand>
        <name>substrate</name>
    </ligand>
</feature>
<feature type="binding site" evidence="1">
    <location>
        <position position="83"/>
    </location>
    <ligand>
        <name>substrate</name>
    </ligand>
</feature>
<proteinExistence type="inferred from homology"/>
<gene>
    <name evidence="1" type="primary">fae-hps</name>
    <name type="ordered locus">UNCMA_20390</name>
    <name type="ORF">RCIX775</name>
</gene>
<reference key="1">
    <citation type="journal article" date="2006" name="Science">
        <title>Genome of rice cluster I archaea -- the key methane producers in the rice rhizosphere.</title>
        <authorList>
            <person name="Erkel C."/>
            <person name="Kube M."/>
            <person name="Reinhardt R."/>
            <person name="Liesack W."/>
        </authorList>
    </citation>
    <scope>NUCLEOTIDE SEQUENCE [LARGE SCALE GENOMIC DNA]</scope>
    <source>
        <strain>DSM 22066 / NBRC 105507 / MRE50</strain>
    </source>
</reference>
<dbReference type="EC" id="4.2.1.147" evidence="1"/>
<dbReference type="EC" id="4.1.2.43" evidence="1"/>
<dbReference type="EMBL" id="AM114193">
    <property type="protein sequence ID" value="CAJ36149.1"/>
    <property type="molecule type" value="Genomic_DNA"/>
</dbReference>
<dbReference type="RefSeq" id="WP_012036362.1">
    <property type="nucleotide sequence ID" value="NC_009464.1"/>
</dbReference>
<dbReference type="SMR" id="Q0W644"/>
<dbReference type="STRING" id="351160.RCIX775"/>
<dbReference type="GeneID" id="5144269"/>
<dbReference type="KEGG" id="rci:RCIX775"/>
<dbReference type="PATRIC" id="fig|351160.9.peg.2092"/>
<dbReference type="eggNOG" id="arCOG00103">
    <property type="taxonomic scope" value="Archaea"/>
</dbReference>
<dbReference type="OrthoDB" id="64276at2157"/>
<dbReference type="UniPathway" id="UPA00293"/>
<dbReference type="Proteomes" id="UP000000663">
    <property type="component" value="Chromosome"/>
</dbReference>
<dbReference type="GO" id="GO:0033982">
    <property type="term" value="F:3-dehydro-L-gulonate-6-phosphate decarboxylase activity"/>
    <property type="evidence" value="ECO:0007669"/>
    <property type="project" value="TreeGrafter"/>
</dbReference>
<dbReference type="GO" id="GO:0016840">
    <property type="term" value="F:carbon-nitrogen lyase activity"/>
    <property type="evidence" value="ECO:0007669"/>
    <property type="project" value="InterPro"/>
</dbReference>
<dbReference type="GO" id="GO:0043801">
    <property type="term" value="F:hexulose-6-phosphate synthase activity"/>
    <property type="evidence" value="ECO:0007669"/>
    <property type="project" value="UniProtKB-UniRule"/>
</dbReference>
<dbReference type="GO" id="GO:0016836">
    <property type="term" value="F:hydro-lyase activity"/>
    <property type="evidence" value="ECO:0007669"/>
    <property type="project" value="UniProtKB-UniRule"/>
</dbReference>
<dbReference type="GO" id="GO:0004590">
    <property type="term" value="F:orotidine-5'-phosphate decarboxylase activity"/>
    <property type="evidence" value="ECO:0007669"/>
    <property type="project" value="InterPro"/>
</dbReference>
<dbReference type="GO" id="GO:0006207">
    <property type="term" value="P:'de novo' pyrimidine nucleobase biosynthetic process"/>
    <property type="evidence" value="ECO:0007669"/>
    <property type="project" value="InterPro"/>
</dbReference>
<dbReference type="GO" id="GO:0016051">
    <property type="term" value="P:carbohydrate biosynthetic process"/>
    <property type="evidence" value="ECO:0007669"/>
    <property type="project" value="UniProtKB-UniRule"/>
</dbReference>
<dbReference type="GO" id="GO:0019854">
    <property type="term" value="P:L-ascorbic acid catabolic process"/>
    <property type="evidence" value="ECO:0007669"/>
    <property type="project" value="TreeGrafter"/>
</dbReference>
<dbReference type="CDD" id="cd04726">
    <property type="entry name" value="KGPDC_HPS"/>
    <property type="match status" value="1"/>
</dbReference>
<dbReference type="FunFam" id="3.30.230.60:FF:000001">
    <property type="entry name" value="5,6,7,8-tetrahydromethanopterin hydro-lyase"/>
    <property type="match status" value="1"/>
</dbReference>
<dbReference type="Gene3D" id="3.20.20.70">
    <property type="entry name" value="Aldolase class I"/>
    <property type="match status" value="1"/>
</dbReference>
<dbReference type="Gene3D" id="3.30.230.60">
    <property type="entry name" value="Formaldehyde-activating enzyme"/>
    <property type="match status" value="1"/>
</dbReference>
<dbReference type="HAMAP" id="MF_01268">
    <property type="entry name" value="Fae_Hps"/>
    <property type="match status" value="1"/>
</dbReference>
<dbReference type="InterPro" id="IPR013785">
    <property type="entry name" value="Aldolase_TIM"/>
</dbReference>
<dbReference type="InterPro" id="IPR020868">
    <property type="entry name" value="Fae/Hps"/>
</dbReference>
<dbReference type="InterPro" id="IPR014826">
    <property type="entry name" value="HCHO-activating_enzyme"/>
</dbReference>
<dbReference type="InterPro" id="IPR037075">
    <property type="entry name" value="HCHO-activating_enzyme_sf"/>
</dbReference>
<dbReference type="InterPro" id="IPR041710">
    <property type="entry name" value="HPS/KGPDC"/>
</dbReference>
<dbReference type="InterPro" id="IPR001754">
    <property type="entry name" value="OMPdeCOase_dom"/>
</dbReference>
<dbReference type="InterPro" id="IPR020568">
    <property type="entry name" value="Ribosomal_Su5_D2-typ_SF"/>
</dbReference>
<dbReference type="InterPro" id="IPR011060">
    <property type="entry name" value="RibuloseP-bd_barrel"/>
</dbReference>
<dbReference type="NCBIfam" id="TIGR03126">
    <property type="entry name" value="one_C_fae"/>
    <property type="match status" value="1"/>
</dbReference>
<dbReference type="NCBIfam" id="NF009833">
    <property type="entry name" value="PRK13307.1"/>
    <property type="match status" value="1"/>
</dbReference>
<dbReference type="PANTHER" id="PTHR35039">
    <property type="entry name" value="3-KETO-L-GULONATE-6-PHOSPHATE DECARBOXYLASE SGBH-RELATED"/>
    <property type="match status" value="1"/>
</dbReference>
<dbReference type="PANTHER" id="PTHR35039:SF3">
    <property type="entry name" value="3-KETO-L-GULONATE-6-PHOSPHATE DECARBOXYLASE SGBH-RELATED"/>
    <property type="match status" value="1"/>
</dbReference>
<dbReference type="Pfam" id="PF08714">
    <property type="entry name" value="Fae"/>
    <property type="match status" value="1"/>
</dbReference>
<dbReference type="Pfam" id="PF00215">
    <property type="entry name" value="OMPdecase"/>
    <property type="match status" value="1"/>
</dbReference>
<dbReference type="SMART" id="SM00934">
    <property type="entry name" value="OMPdecase"/>
    <property type="match status" value="1"/>
</dbReference>
<dbReference type="SUPFAM" id="SSF54211">
    <property type="entry name" value="Ribosomal protein S5 domain 2-like"/>
    <property type="match status" value="1"/>
</dbReference>
<dbReference type="SUPFAM" id="SSF51366">
    <property type="entry name" value="Ribulose-phoshate binding barrel"/>
    <property type="match status" value="1"/>
</dbReference>
<organism>
    <name type="scientific">Methanocella arvoryzae (strain DSM 22066 / NBRC 105507 / MRE50)</name>
    <dbReference type="NCBI Taxonomy" id="351160"/>
    <lineage>
        <taxon>Archaea</taxon>
        <taxon>Methanobacteriati</taxon>
        <taxon>Methanobacteriota</taxon>
        <taxon>Stenosarchaea group</taxon>
        <taxon>Methanomicrobia</taxon>
        <taxon>Methanocellales</taxon>
        <taxon>Methanocellaceae</taxon>
        <taxon>Methanocella</taxon>
    </lineage>
</organism>
<keyword id="KW-0119">Carbohydrate metabolism</keyword>
<keyword id="KW-0456">Lyase</keyword>
<keyword id="KW-0511">Multifunctional enzyme</keyword>
<keyword id="KW-1185">Reference proteome</keyword>
<sequence>MYQIGEALIGEGNEVAHIDLLIGDKNGPVGIAFANGMTQLSMGHTPLLAVVRPNLIPKPATLIVPKVTVKNMGQAAQIFGPAQAAVAKAVADAVEEGVVPKDLCEDVVIIVSVFIHPEAQDPTKIYKYNYGATKLALTRAMEKFPGVDKVTYEKDRGVHAIMGYKITRLWDAPYLQIAIDAPDLGVVERVLKNVPKNDHLIIEAGTPLIKRYGLSVISKIREIRKDAFIVADLKTLDTGNLEARMAADNLADAVVCSGLAPIATIEKFIEEARKVGIYSIIDTLNVENPAKLIAALKVKPDIVELHRGIDTESQSAEHAWGNIPEIKKAAGGKKLLVAVAGGVKVENVETALKGGADILVVGRSITNAKDIEGESRRFLQAMKKDEIDQYRIMTDF</sequence>
<evidence type="ECO:0000255" key="1">
    <source>
        <dbReference type="HAMAP-Rule" id="MF_01268"/>
    </source>
</evidence>
<protein>
    <recommendedName>
        <fullName evidence="1">Bifunctional enzyme Fae/Hps</fullName>
    </recommendedName>
    <domain>
        <recommendedName>
            <fullName evidence="1">5,6,7,8-tetrahydromethanopterin hydro-lyase</fullName>
            <ecNumber evidence="1">4.2.1.147</ecNumber>
        </recommendedName>
        <alternativeName>
            <fullName evidence="1">Formaldehyde-activating enzyme</fullName>
            <shortName evidence="1">Fae</shortName>
        </alternativeName>
    </domain>
    <domain>
        <recommendedName>
            <fullName evidence="1">3-hexulose-6-phosphate synthase</fullName>
            <shortName evidence="1">HPS</shortName>
            <ecNumber evidence="1">4.1.2.43</ecNumber>
        </recommendedName>
        <alternativeName>
            <fullName evidence="1">D-arabino-3-hexulose-6-phosphate formaldehyde lyase</fullName>
        </alternativeName>
    </domain>
</protein>